<accession>Q7VMS6</accession>
<comment type="function">
    <text evidence="1">Catalyzes the ATP-dependent phosphorylation of N-acetyl-L-glutamate.</text>
</comment>
<comment type="catalytic activity">
    <reaction evidence="1">
        <text>N-acetyl-L-glutamate + ATP = N-acetyl-L-glutamyl 5-phosphate + ADP</text>
        <dbReference type="Rhea" id="RHEA:14629"/>
        <dbReference type="ChEBI" id="CHEBI:30616"/>
        <dbReference type="ChEBI" id="CHEBI:44337"/>
        <dbReference type="ChEBI" id="CHEBI:57936"/>
        <dbReference type="ChEBI" id="CHEBI:456216"/>
        <dbReference type="EC" id="2.7.2.8"/>
    </reaction>
</comment>
<comment type="pathway">
    <text evidence="1">Amino-acid biosynthesis; L-arginine biosynthesis; N(2)-acetyl-L-ornithine from L-glutamate: step 2/4.</text>
</comment>
<comment type="subcellular location">
    <subcellularLocation>
        <location evidence="1">Cytoplasm</location>
    </subcellularLocation>
</comment>
<comment type="similarity">
    <text evidence="1">Belongs to the acetylglutamate kinase family. ArgB subfamily.</text>
</comment>
<feature type="chain" id="PRO_0000112620" description="Acetylglutamate kinase">
    <location>
        <begin position="1"/>
        <end position="284"/>
    </location>
</feature>
<feature type="binding site" evidence="1">
    <location>
        <begin position="64"/>
        <end position="65"/>
    </location>
    <ligand>
        <name>substrate</name>
    </ligand>
</feature>
<feature type="binding site" evidence="1">
    <location>
        <position position="86"/>
    </location>
    <ligand>
        <name>substrate</name>
    </ligand>
</feature>
<feature type="binding site" evidence="1">
    <location>
        <position position="177"/>
    </location>
    <ligand>
        <name>substrate</name>
    </ligand>
</feature>
<feature type="site" description="Transition state stabilizer" evidence="1">
    <location>
        <position position="29"/>
    </location>
</feature>
<feature type="site" description="Transition state stabilizer" evidence="1">
    <location>
        <position position="240"/>
    </location>
</feature>
<protein>
    <recommendedName>
        <fullName evidence="1">Acetylglutamate kinase</fullName>
        <ecNumber evidence="1">2.7.2.8</ecNumber>
    </recommendedName>
    <alternativeName>
        <fullName evidence="1">N-acetyl-L-glutamate 5-phosphotransferase</fullName>
    </alternativeName>
    <alternativeName>
        <fullName evidence="1">NAG kinase</fullName>
        <shortName evidence="1">NAGK</shortName>
    </alternativeName>
</protein>
<reference key="1">
    <citation type="submission" date="2003-06" db="EMBL/GenBank/DDBJ databases">
        <title>The complete genome sequence of Haemophilus ducreyi.</title>
        <authorList>
            <person name="Munson R.S. Jr."/>
            <person name="Ray W.C."/>
            <person name="Mahairas G."/>
            <person name="Sabo P."/>
            <person name="Mungur R."/>
            <person name="Johnson L."/>
            <person name="Nguyen D."/>
            <person name="Wang J."/>
            <person name="Forst C."/>
            <person name="Hood L."/>
        </authorList>
    </citation>
    <scope>NUCLEOTIDE SEQUENCE [LARGE SCALE GENOMIC DNA]</scope>
    <source>
        <strain>35000HP / ATCC 700724</strain>
    </source>
</reference>
<evidence type="ECO:0000255" key="1">
    <source>
        <dbReference type="HAMAP-Rule" id="MF_00082"/>
    </source>
</evidence>
<keyword id="KW-0028">Amino-acid biosynthesis</keyword>
<keyword id="KW-0055">Arginine biosynthesis</keyword>
<keyword id="KW-0067">ATP-binding</keyword>
<keyword id="KW-0963">Cytoplasm</keyword>
<keyword id="KW-0418">Kinase</keyword>
<keyword id="KW-0547">Nucleotide-binding</keyword>
<keyword id="KW-1185">Reference proteome</keyword>
<keyword id="KW-0808">Transferase</keyword>
<organism>
    <name type="scientific">Haemophilus ducreyi (strain 35000HP / ATCC 700724)</name>
    <dbReference type="NCBI Taxonomy" id="233412"/>
    <lineage>
        <taxon>Bacteria</taxon>
        <taxon>Pseudomonadati</taxon>
        <taxon>Pseudomonadota</taxon>
        <taxon>Gammaproteobacteria</taxon>
        <taxon>Pasteurellales</taxon>
        <taxon>Pasteurellaceae</taxon>
        <taxon>Haemophilus</taxon>
    </lineage>
</organism>
<dbReference type="EC" id="2.7.2.8" evidence="1"/>
<dbReference type="EMBL" id="AE017143">
    <property type="protein sequence ID" value="AAP95777.1"/>
    <property type="molecule type" value="Genomic_DNA"/>
</dbReference>
<dbReference type="RefSeq" id="WP_010944827.1">
    <property type="nucleotide sequence ID" value="NC_002940.2"/>
</dbReference>
<dbReference type="SMR" id="Q7VMS6"/>
<dbReference type="STRING" id="233412.HD_0891"/>
<dbReference type="KEGG" id="hdu:HD_0891"/>
<dbReference type="eggNOG" id="COG0548">
    <property type="taxonomic scope" value="Bacteria"/>
</dbReference>
<dbReference type="HOGENOM" id="CLU_053680_0_0_6"/>
<dbReference type="OrthoDB" id="9803155at2"/>
<dbReference type="UniPathway" id="UPA00068">
    <property type="reaction ID" value="UER00107"/>
</dbReference>
<dbReference type="Proteomes" id="UP000001022">
    <property type="component" value="Chromosome"/>
</dbReference>
<dbReference type="GO" id="GO:0005737">
    <property type="term" value="C:cytoplasm"/>
    <property type="evidence" value="ECO:0007669"/>
    <property type="project" value="UniProtKB-SubCell"/>
</dbReference>
<dbReference type="GO" id="GO:0003991">
    <property type="term" value="F:acetylglutamate kinase activity"/>
    <property type="evidence" value="ECO:0007669"/>
    <property type="project" value="UniProtKB-UniRule"/>
</dbReference>
<dbReference type="GO" id="GO:0005524">
    <property type="term" value="F:ATP binding"/>
    <property type="evidence" value="ECO:0007669"/>
    <property type="project" value="UniProtKB-UniRule"/>
</dbReference>
<dbReference type="GO" id="GO:0042450">
    <property type="term" value="P:arginine biosynthetic process via ornithine"/>
    <property type="evidence" value="ECO:0007669"/>
    <property type="project" value="UniProtKB-UniRule"/>
</dbReference>
<dbReference type="GO" id="GO:0006526">
    <property type="term" value="P:L-arginine biosynthetic process"/>
    <property type="evidence" value="ECO:0007669"/>
    <property type="project" value="UniProtKB-UniPathway"/>
</dbReference>
<dbReference type="CDD" id="cd04250">
    <property type="entry name" value="AAK_NAGK-C"/>
    <property type="match status" value="1"/>
</dbReference>
<dbReference type="FunFam" id="3.40.1160.10:FF:000004">
    <property type="entry name" value="Acetylglutamate kinase"/>
    <property type="match status" value="1"/>
</dbReference>
<dbReference type="Gene3D" id="3.40.1160.10">
    <property type="entry name" value="Acetylglutamate kinase-like"/>
    <property type="match status" value="1"/>
</dbReference>
<dbReference type="HAMAP" id="MF_00082">
    <property type="entry name" value="ArgB"/>
    <property type="match status" value="1"/>
</dbReference>
<dbReference type="InterPro" id="IPR036393">
    <property type="entry name" value="AceGlu_kinase-like_sf"/>
</dbReference>
<dbReference type="InterPro" id="IPR004662">
    <property type="entry name" value="AcgluKinase_fam"/>
</dbReference>
<dbReference type="InterPro" id="IPR037528">
    <property type="entry name" value="ArgB"/>
</dbReference>
<dbReference type="InterPro" id="IPR001048">
    <property type="entry name" value="Asp/Glu/Uridylate_kinase"/>
</dbReference>
<dbReference type="InterPro" id="IPR001057">
    <property type="entry name" value="Glu/AcGlu_kinase"/>
</dbReference>
<dbReference type="InterPro" id="IPR041727">
    <property type="entry name" value="NAGK-C"/>
</dbReference>
<dbReference type="NCBIfam" id="TIGR00761">
    <property type="entry name" value="argB"/>
    <property type="match status" value="1"/>
</dbReference>
<dbReference type="PANTHER" id="PTHR23342">
    <property type="entry name" value="N-ACETYLGLUTAMATE SYNTHASE"/>
    <property type="match status" value="1"/>
</dbReference>
<dbReference type="PANTHER" id="PTHR23342:SF0">
    <property type="entry name" value="N-ACETYLGLUTAMATE SYNTHASE, MITOCHONDRIAL"/>
    <property type="match status" value="1"/>
</dbReference>
<dbReference type="Pfam" id="PF00696">
    <property type="entry name" value="AA_kinase"/>
    <property type="match status" value="1"/>
</dbReference>
<dbReference type="PIRSF" id="PIRSF000728">
    <property type="entry name" value="NAGK"/>
    <property type="match status" value="1"/>
</dbReference>
<dbReference type="PRINTS" id="PR00474">
    <property type="entry name" value="GLU5KINASE"/>
</dbReference>
<dbReference type="SUPFAM" id="SSF53633">
    <property type="entry name" value="Carbamate kinase-like"/>
    <property type="match status" value="1"/>
</dbReference>
<sequence>MNQTTTFDKLCNYSAACLANWQGKTIVVKYGGNAMISAELKQTVMQNILLLNQYGINVVLVHGGGPEISLGMKLLGKEPQFINGLRVTDQDTIDVVLQMLAGKVNKRLVALLKGKGIGLCGIDGGLIQCEKLEAELDYGLVGNIVQVDITVLQMALAANLIPVIAAVAVDQQGIIYNVNADTVASEIAVALGADKLVLMTDIAGLLADRNDERSLMSRVEVSQVETLIAQGIISDGMIPKVASCTRFINAGGIEAHIIDGRIKHAILLSILSDKQNGTRFYKEK</sequence>
<name>ARGB_HAEDU</name>
<proteinExistence type="inferred from homology"/>
<gene>
    <name evidence="1" type="primary">argB</name>
    <name type="ordered locus">HD_0891</name>
</gene>